<name>PX11B_CANBO</name>
<sequence>MVYGELIYHPVVTKLLKFLDSSASREKLLRLLQYLCRFLTFYTFKRNFNIETIQLIKKIQSSIGISRKPLRFLKNLPHLKNLNKIYSNELLDSTLKIGDLIKNFGYALYFQFDTLQWLKLLGLLTSKNSGSLYFKIDKLAANFWLIGLTGSIITDLRNLKISYDSNKALLNEINSQNNNSNNDTLDEKLIEQNNDLILKNNEKINLNKRDLFKNILDSLIALKGSQLIDLNDGVLGFAGIITSIIGIEDIWNATKA</sequence>
<keyword id="KW-0903">Direct protein sequencing</keyword>
<keyword id="KW-0472">Membrane</keyword>
<keyword id="KW-0576">Peroxisome</keyword>
<keyword id="KW-0962">Peroxisome biogenesis</keyword>
<proteinExistence type="evidence at protein level"/>
<reference key="1">
    <citation type="journal article" date="1994" name="Yeast">
        <title>The peroxisomal membrane proteins of Candida boidinii: gene isolation and expression.</title>
        <authorList>
            <person name="Moreno M."/>
            <person name="Lark R."/>
            <person name="Campbell K.L."/>
            <person name="Goodman J.M."/>
        </authorList>
    </citation>
    <scope>NUCLEOTIDE SEQUENCE [GENOMIC DNA]</scope>
    <scope>PROTEIN SEQUENCE OF 47-56; 189-199 AND 204-209</scope>
    <source>
        <strain>ATCC 32195</strain>
    </source>
</reference>
<reference key="2">
    <citation type="journal article" date="1995" name="J. Bacteriol.">
        <title>The Candida boidinii peroxisomal membrane protein Pmp30 has a role in peroxisomal proliferation and is functionally homologous to Pmp27 from Saccharomyces cerevisiae.</title>
        <authorList>
            <person name="Sakai Y."/>
            <person name="Marshall P.A."/>
            <person name="Saiganji A."/>
            <person name="Takabe K."/>
            <person name="Saiki H."/>
            <person name="Kato N."/>
            <person name="Goodman J.M."/>
        </authorList>
    </citation>
    <scope>NUCLEOTIDE SEQUENCE [GENOMIC DNA]</scope>
    <source>
        <strain>S2</strain>
    </source>
</reference>
<evidence type="ECO:0000305" key="1"/>
<organism>
    <name type="scientific">Candida boidinii</name>
    <name type="common">Yeast</name>
    <dbReference type="NCBI Taxonomy" id="5477"/>
    <lineage>
        <taxon>Eukaryota</taxon>
        <taxon>Fungi</taxon>
        <taxon>Dikarya</taxon>
        <taxon>Ascomycota</taxon>
        <taxon>Saccharomycotina</taxon>
        <taxon>Pichiomycetes</taxon>
        <taxon>Pichiales</taxon>
        <taxon>Pichiaceae</taxon>
        <taxon>Ogataea</taxon>
        <taxon>Ogataea/Candida clade</taxon>
    </lineage>
</organism>
<feature type="chain" id="PRO_0000105973" description="Peroxisomal membrane protein PMP30B">
    <location>
        <begin position="1"/>
        <end position="256"/>
    </location>
</feature>
<feature type="sequence variant" description="In strain: S2.">
    <original>S</original>
    <variation>R</variation>
    <location>
        <position position="66"/>
    </location>
</feature>
<feature type="sequence variant" description="In strain: S2.">
    <original>K</original>
    <variation>T</variation>
    <location>
        <position position="68"/>
    </location>
</feature>
<feature type="sequence variant" description="In strain: S2.">
    <original>L</original>
    <variation>S</variation>
    <location>
        <position position="73"/>
    </location>
</feature>
<comment type="function">
    <text>Involved in peroxisomal proliferation. Could participate in peroxisomal elongation or fission. May be involved in parceling of peroxisomes into regular quanta.</text>
</comment>
<comment type="subcellular location">
    <subcellularLocation>
        <location>Peroxisome membrane</location>
        <topology>Peripheral membrane protein</topology>
    </subcellularLocation>
</comment>
<comment type="similarity">
    <text evidence="1">Belongs to the peroxin-11 family.</text>
</comment>
<accession>Q00317</accession>
<accession>Q00315</accession>
<protein>
    <recommendedName>
        <fullName>Peroxisomal membrane protein PMP30B</fullName>
    </recommendedName>
    <alternativeName>
        <fullName>Peroxin-11B</fullName>
    </alternativeName>
    <alternativeName>
        <fullName>Peroxisomal membrane protein PMP32</fullName>
    </alternativeName>
</protein>
<dbReference type="EMBL" id="L28000">
    <property type="protein sequence ID" value="AAA66347.1"/>
    <property type="molecule type" value="Genomic_DNA"/>
</dbReference>
<dbReference type="EMBL" id="U36243">
    <property type="protein sequence ID" value="AAA85897.1"/>
    <property type="molecule type" value="Genomic_DNA"/>
</dbReference>
<dbReference type="PIR" id="S50281">
    <property type="entry name" value="S50281"/>
</dbReference>
<dbReference type="SMR" id="Q00317"/>
<dbReference type="OrthoDB" id="411017at2759"/>
<dbReference type="GO" id="GO:0005778">
    <property type="term" value="C:peroxisomal membrane"/>
    <property type="evidence" value="ECO:0000250"/>
    <property type="project" value="UniProtKB"/>
</dbReference>
<dbReference type="GO" id="GO:0016559">
    <property type="term" value="P:peroxisome fission"/>
    <property type="evidence" value="ECO:0007669"/>
    <property type="project" value="InterPro"/>
</dbReference>
<dbReference type="GO" id="GO:0007031">
    <property type="term" value="P:peroxisome organization"/>
    <property type="evidence" value="ECO:0000250"/>
    <property type="project" value="UniProtKB"/>
</dbReference>
<dbReference type="GO" id="GO:0007165">
    <property type="term" value="P:signal transduction"/>
    <property type="evidence" value="ECO:0000250"/>
    <property type="project" value="UniProtKB"/>
</dbReference>
<dbReference type="InterPro" id="IPR008733">
    <property type="entry name" value="PEX11"/>
</dbReference>
<dbReference type="PANTHER" id="PTHR12652:SF50">
    <property type="entry name" value="PEROXIN 11"/>
    <property type="match status" value="1"/>
</dbReference>
<dbReference type="PANTHER" id="PTHR12652">
    <property type="entry name" value="PEROXISOMAL BIOGENESIS FACTOR 11"/>
    <property type="match status" value="1"/>
</dbReference>
<dbReference type="Pfam" id="PF05648">
    <property type="entry name" value="PEX11"/>
    <property type="match status" value="1"/>
</dbReference>
<gene>
    <name type="primary">PEX11B</name>
    <name type="synonym">PMP30</name>
    <name type="synonym">PMP30B</name>
    <name type="synonym">PMP32</name>
</gene>